<name>TBB_LYMST</name>
<feature type="chain" id="PRO_0000048300" description="Tubulin beta chain">
    <location>
        <begin position="1" status="less than"/>
        <end position="111"/>
    </location>
</feature>
<feature type="region of interest" description="Disordered" evidence="2">
    <location>
        <begin position="82"/>
        <end position="111"/>
    </location>
</feature>
<feature type="compositionally biased region" description="Acidic residues" evidence="2">
    <location>
        <begin position="91"/>
        <end position="111"/>
    </location>
</feature>
<feature type="non-terminal residue">
    <location>
        <position position="1"/>
    </location>
</feature>
<organism>
    <name type="scientific">Lymnaea stagnalis</name>
    <name type="common">Great pond snail</name>
    <name type="synonym">Helix stagnalis</name>
    <dbReference type="NCBI Taxonomy" id="6523"/>
    <lineage>
        <taxon>Eukaryota</taxon>
        <taxon>Metazoa</taxon>
        <taxon>Spiralia</taxon>
        <taxon>Lophotrochozoa</taxon>
        <taxon>Mollusca</taxon>
        <taxon>Gastropoda</taxon>
        <taxon>Heterobranchia</taxon>
        <taxon>Euthyneura</taxon>
        <taxon>Panpulmonata</taxon>
        <taxon>Hygrophila</taxon>
        <taxon>Lymnaeoidea</taxon>
        <taxon>Lymnaeidae</taxon>
        <taxon>Lymnaea</taxon>
    </lineage>
</organism>
<evidence type="ECO:0000250" key="1">
    <source>
        <dbReference type="UniProtKB" id="P68363"/>
    </source>
</evidence>
<evidence type="ECO:0000256" key="2">
    <source>
        <dbReference type="SAM" id="MobiDB-lite"/>
    </source>
</evidence>
<evidence type="ECO:0000305" key="3"/>
<proteinExistence type="evidence at transcript level"/>
<reference key="1">
    <citation type="submission" date="1989-06" db="EMBL/GenBank/DDBJ databases">
        <authorList>
            <person name="Smit A.B."/>
            <person name="Thijsen S.F.T."/>
            <person name="Geraerts W.P.M."/>
            <person name="van Heerikhuizen H."/>
        </authorList>
    </citation>
    <scope>NUCLEOTIDE SEQUENCE [MRNA]</scope>
</reference>
<keyword id="KW-0963">Cytoplasm</keyword>
<keyword id="KW-0206">Cytoskeleton</keyword>
<keyword id="KW-0342">GTP-binding</keyword>
<keyword id="KW-0493">Microtubule</keyword>
<keyword id="KW-0547">Nucleotide-binding</keyword>
<comment type="function">
    <text>Tubulin is the major constituent of microtubules, a cylinder consisting of laterally associated linear protofilaments composed of alpha- and beta-tubulin heterodimers. Microtubules grow by the addition of GTP-tubulin dimers to the microtubule end, where a stabilizing cap forms. Below the cap, tubulin dimers are in GDP-bound state, owing to GTPase activity of alpha-tubulin.</text>
</comment>
<comment type="cofactor">
    <cofactor evidence="1">
        <name>Mg(2+)</name>
        <dbReference type="ChEBI" id="CHEBI:18420"/>
    </cofactor>
</comment>
<comment type="subunit">
    <text>Dimer of alpha and beta chains. A typical microtubule is a hollow water-filled tube with an outer diameter of 25 nm and an inner diameter of 15 nM. Alpha-beta heterodimers associate head-to-tail to form protofilaments running lengthwise along the microtubule wall with the beta-tubulin subunit facing the microtubule plus end conferring a structural polarity. Microtubules usually have 13 protofilaments but different protofilament numbers can be found in some organisms and specialized cells.</text>
</comment>
<comment type="subcellular location">
    <subcellularLocation>
        <location>Cytoplasm</location>
        <location>Cytoskeleton</location>
    </subcellularLocation>
</comment>
<comment type="similarity">
    <text evidence="3">Belongs to the tubulin family.</text>
</comment>
<protein>
    <recommendedName>
        <fullName>Tubulin beta chain</fullName>
    </recommendedName>
    <alternativeName>
        <fullName>Beta-tubulin</fullName>
    </alternativeName>
</protein>
<sequence>SYFVEWIPNNVKTAVCDIPPRGLKMSATFIGNSTAIQELFKRISEQFTAMFRRKAFLHWYTGEGMDEMEFTEAESNMNDLVSEYQQYQDATAEDEGEFDEEEAEGEGQEYA</sequence>
<accession>P18699</accession>
<dbReference type="EMBL" id="X15542">
    <property type="protein sequence ID" value="CAA33549.1"/>
    <property type="molecule type" value="mRNA"/>
</dbReference>
<dbReference type="PIR" id="S08011">
    <property type="entry name" value="S08011"/>
</dbReference>
<dbReference type="SMR" id="P18699"/>
<dbReference type="GO" id="GO:0005737">
    <property type="term" value="C:cytoplasm"/>
    <property type="evidence" value="ECO:0007669"/>
    <property type="project" value="UniProtKB-KW"/>
</dbReference>
<dbReference type="GO" id="GO:0005874">
    <property type="term" value="C:microtubule"/>
    <property type="evidence" value="ECO:0007669"/>
    <property type="project" value="UniProtKB-KW"/>
</dbReference>
<dbReference type="GO" id="GO:0005525">
    <property type="term" value="F:GTP binding"/>
    <property type="evidence" value="ECO:0007669"/>
    <property type="project" value="UniProtKB-KW"/>
</dbReference>
<dbReference type="GO" id="GO:0003924">
    <property type="term" value="F:GTPase activity"/>
    <property type="evidence" value="ECO:0007669"/>
    <property type="project" value="InterPro"/>
</dbReference>
<dbReference type="GO" id="GO:0005200">
    <property type="term" value="F:structural constituent of cytoskeleton"/>
    <property type="evidence" value="ECO:0007669"/>
    <property type="project" value="InterPro"/>
</dbReference>
<dbReference type="GO" id="GO:0007017">
    <property type="term" value="P:microtubule-based process"/>
    <property type="evidence" value="ECO:0007669"/>
    <property type="project" value="InterPro"/>
</dbReference>
<dbReference type="FunFam" id="1.10.287.600:FF:000006">
    <property type="entry name" value="Tubulin beta chain"/>
    <property type="match status" value="1"/>
</dbReference>
<dbReference type="Gene3D" id="1.10.287.600">
    <property type="entry name" value="Helix hairpin bin"/>
    <property type="match status" value="1"/>
</dbReference>
<dbReference type="Gene3D" id="3.30.1330.20">
    <property type="entry name" value="Tubulin/FtsZ, C-terminal domain"/>
    <property type="match status" value="1"/>
</dbReference>
<dbReference type="InterPro" id="IPR002453">
    <property type="entry name" value="Beta_tubulin"/>
</dbReference>
<dbReference type="InterPro" id="IPR008280">
    <property type="entry name" value="Tub_FtsZ_C"/>
</dbReference>
<dbReference type="InterPro" id="IPR037103">
    <property type="entry name" value="Tubulin/FtsZ-like_C"/>
</dbReference>
<dbReference type="InterPro" id="IPR018316">
    <property type="entry name" value="Tubulin/FtsZ_2-layer-sand-dom"/>
</dbReference>
<dbReference type="InterPro" id="IPR023123">
    <property type="entry name" value="Tubulin_C"/>
</dbReference>
<dbReference type="PANTHER" id="PTHR36527">
    <property type="entry name" value="OS01G0282866 PROTEIN"/>
    <property type="match status" value="1"/>
</dbReference>
<dbReference type="PANTHER" id="PTHR36527:SF8">
    <property type="entry name" value="TUBULIN BETA-4B CHAIN"/>
    <property type="match status" value="1"/>
</dbReference>
<dbReference type="Pfam" id="PF03953">
    <property type="entry name" value="Tubulin_C"/>
    <property type="match status" value="1"/>
</dbReference>
<dbReference type="PRINTS" id="PR01163">
    <property type="entry name" value="BETATUBULIN"/>
</dbReference>
<dbReference type="SUPFAM" id="SSF55307">
    <property type="entry name" value="Tubulin C-terminal domain-like"/>
    <property type="match status" value="1"/>
</dbReference>